<comment type="function">
    <text evidence="1">DNA-dependent RNA polymerase catalyzes the transcription of DNA into RNA using the four ribonucleoside triphosphates as substrates.</text>
</comment>
<comment type="catalytic activity">
    <reaction evidence="1">
        <text>RNA(n) + a ribonucleoside 5'-triphosphate = RNA(n+1) + diphosphate</text>
        <dbReference type="Rhea" id="RHEA:21248"/>
        <dbReference type="Rhea" id="RHEA-COMP:14527"/>
        <dbReference type="Rhea" id="RHEA-COMP:17342"/>
        <dbReference type="ChEBI" id="CHEBI:33019"/>
        <dbReference type="ChEBI" id="CHEBI:61557"/>
        <dbReference type="ChEBI" id="CHEBI:140395"/>
        <dbReference type="EC" id="2.7.7.6"/>
    </reaction>
</comment>
<comment type="subunit">
    <text evidence="1">Homodimer. The RNAP catalytic core consists of 2 alpha, 1 beta, 1 beta' and 1 omega subunit. When a sigma factor is associated with the core the holoenzyme is formed, which can initiate transcription.</text>
</comment>
<comment type="domain">
    <text evidence="1">The N-terminal domain is essential for RNAP assembly and basal transcription, whereas the C-terminal domain is involved in interaction with transcriptional regulators and with upstream promoter elements.</text>
</comment>
<comment type="similarity">
    <text evidence="1">Belongs to the RNA polymerase alpha chain family.</text>
</comment>
<evidence type="ECO:0000255" key="1">
    <source>
        <dbReference type="HAMAP-Rule" id="MF_00059"/>
    </source>
</evidence>
<proteinExistence type="inferred from homology"/>
<keyword id="KW-0240">DNA-directed RNA polymerase</keyword>
<keyword id="KW-0548">Nucleotidyltransferase</keyword>
<keyword id="KW-0804">Transcription</keyword>
<keyword id="KW-0808">Transferase</keyword>
<sequence length="314" mass="34851">MIEIEKPKIETVELSEDAKYGKFVVEPLERGYGTTLGNSLRRILLSSLPGAAVTSVQIDGVLHEFSTIEGVVEDVTAIILNVKKLALKIYSDEEKTLEIDVQGEGVVTAADITHDSDVEILNPDLHIATLAEGGRLRMRMTARRGRGYVPAEANKREDQPIGVIPIDSIYTPVSRVSYQVENTRVGQVTDYDKLTIDVWTDGSIGPKEAISLGAKILTEHLNIFVGLTDEAQNAEIMVEKEDDQKEKVLEMTIEELDLSVRSYNCLKRAGINTVQELTQKTEEDMMKVRNLGRKSLEEVKAKLAELGLSLRKDD</sequence>
<dbReference type="EC" id="2.7.7.6" evidence="1"/>
<dbReference type="EMBL" id="CP000557">
    <property type="protein sequence ID" value="ABO65518.1"/>
    <property type="molecule type" value="Genomic_DNA"/>
</dbReference>
<dbReference type="RefSeq" id="WP_008881918.1">
    <property type="nucleotide sequence ID" value="NC_009328.1"/>
</dbReference>
<dbReference type="SMR" id="A4IJL4"/>
<dbReference type="GeneID" id="87622299"/>
<dbReference type="KEGG" id="gtn:GTNG_0131"/>
<dbReference type="eggNOG" id="COG0202">
    <property type="taxonomic scope" value="Bacteria"/>
</dbReference>
<dbReference type="HOGENOM" id="CLU_053084_0_1_9"/>
<dbReference type="Proteomes" id="UP000001578">
    <property type="component" value="Chromosome"/>
</dbReference>
<dbReference type="GO" id="GO:0005737">
    <property type="term" value="C:cytoplasm"/>
    <property type="evidence" value="ECO:0007669"/>
    <property type="project" value="UniProtKB-ARBA"/>
</dbReference>
<dbReference type="GO" id="GO:0000428">
    <property type="term" value="C:DNA-directed RNA polymerase complex"/>
    <property type="evidence" value="ECO:0007669"/>
    <property type="project" value="UniProtKB-KW"/>
</dbReference>
<dbReference type="GO" id="GO:0003677">
    <property type="term" value="F:DNA binding"/>
    <property type="evidence" value="ECO:0007669"/>
    <property type="project" value="UniProtKB-UniRule"/>
</dbReference>
<dbReference type="GO" id="GO:0003899">
    <property type="term" value="F:DNA-directed RNA polymerase activity"/>
    <property type="evidence" value="ECO:0007669"/>
    <property type="project" value="UniProtKB-UniRule"/>
</dbReference>
<dbReference type="GO" id="GO:0046983">
    <property type="term" value="F:protein dimerization activity"/>
    <property type="evidence" value="ECO:0007669"/>
    <property type="project" value="InterPro"/>
</dbReference>
<dbReference type="GO" id="GO:0006351">
    <property type="term" value="P:DNA-templated transcription"/>
    <property type="evidence" value="ECO:0007669"/>
    <property type="project" value="UniProtKB-UniRule"/>
</dbReference>
<dbReference type="CDD" id="cd06928">
    <property type="entry name" value="RNAP_alpha_NTD"/>
    <property type="match status" value="1"/>
</dbReference>
<dbReference type="FunFam" id="1.10.150.20:FF:000001">
    <property type="entry name" value="DNA-directed RNA polymerase subunit alpha"/>
    <property type="match status" value="1"/>
</dbReference>
<dbReference type="FunFam" id="2.170.120.12:FF:000001">
    <property type="entry name" value="DNA-directed RNA polymerase subunit alpha"/>
    <property type="match status" value="1"/>
</dbReference>
<dbReference type="Gene3D" id="1.10.150.20">
    <property type="entry name" value="5' to 3' exonuclease, C-terminal subdomain"/>
    <property type="match status" value="1"/>
</dbReference>
<dbReference type="Gene3D" id="2.170.120.12">
    <property type="entry name" value="DNA-directed RNA polymerase, insert domain"/>
    <property type="match status" value="1"/>
</dbReference>
<dbReference type="Gene3D" id="3.30.1360.10">
    <property type="entry name" value="RNA polymerase, RBP11-like subunit"/>
    <property type="match status" value="1"/>
</dbReference>
<dbReference type="HAMAP" id="MF_00059">
    <property type="entry name" value="RNApol_bact_RpoA"/>
    <property type="match status" value="1"/>
</dbReference>
<dbReference type="InterPro" id="IPR011262">
    <property type="entry name" value="DNA-dir_RNA_pol_insert"/>
</dbReference>
<dbReference type="InterPro" id="IPR011263">
    <property type="entry name" value="DNA-dir_RNA_pol_RpoA/D/Rpb3"/>
</dbReference>
<dbReference type="InterPro" id="IPR011773">
    <property type="entry name" value="DNA-dir_RpoA"/>
</dbReference>
<dbReference type="InterPro" id="IPR036603">
    <property type="entry name" value="RBP11-like"/>
</dbReference>
<dbReference type="InterPro" id="IPR011260">
    <property type="entry name" value="RNAP_asu_C"/>
</dbReference>
<dbReference type="InterPro" id="IPR036643">
    <property type="entry name" value="RNApol_insert_sf"/>
</dbReference>
<dbReference type="NCBIfam" id="NF003513">
    <property type="entry name" value="PRK05182.1-2"/>
    <property type="match status" value="1"/>
</dbReference>
<dbReference type="NCBIfam" id="NF003515">
    <property type="entry name" value="PRK05182.2-1"/>
    <property type="match status" value="1"/>
</dbReference>
<dbReference type="NCBIfam" id="NF003516">
    <property type="entry name" value="PRK05182.2-2"/>
    <property type="match status" value="1"/>
</dbReference>
<dbReference type="NCBIfam" id="NF003519">
    <property type="entry name" value="PRK05182.2-5"/>
    <property type="match status" value="1"/>
</dbReference>
<dbReference type="NCBIfam" id="TIGR02027">
    <property type="entry name" value="rpoA"/>
    <property type="match status" value="1"/>
</dbReference>
<dbReference type="Pfam" id="PF01000">
    <property type="entry name" value="RNA_pol_A_bac"/>
    <property type="match status" value="1"/>
</dbReference>
<dbReference type="Pfam" id="PF03118">
    <property type="entry name" value="RNA_pol_A_CTD"/>
    <property type="match status" value="1"/>
</dbReference>
<dbReference type="Pfam" id="PF01193">
    <property type="entry name" value="RNA_pol_L"/>
    <property type="match status" value="1"/>
</dbReference>
<dbReference type="SMART" id="SM00662">
    <property type="entry name" value="RPOLD"/>
    <property type="match status" value="1"/>
</dbReference>
<dbReference type="SUPFAM" id="SSF47789">
    <property type="entry name" value="C-terminal domain of RNA polymerase alpha subunit"/>
    <property type="match status" value="1"/>
</dbReference>
<dbReference type="SUPFAM" id="SSF56553">
    <property type="entry name" value="Insert subdomain of RNA polymerase alpha subunit"/>
    <property type="match status" value="1"/>
</dbReference>
<dbReference type="SUPFAM" id="SSF55257">
    <property type="entry name" value="RBP11-like subunits of RNA polymerase"/>
    <property type="match status" value="1"/>
</dbReference>
<organism>
    <name type="scientific">Geobacillus thermodenitrificans (strain NG80-2)</name>
    <dbReference type="NCBI Taxonomy" id="420246"/>
    <lineage>
        <taxon>Bacteria</taxon>
        <taxon>Bacillati</taxon>
        <taxon>Bacillota</taxon>
        <taxon>Bacilli</taxon>
        <taxon>Bacillales</taxon>
        <taxon>Anoxybacillaceae</taxon>
        <taxon>Geobacillus</taxon>
    </lineage>
</organism>
<name>RPOA_GEOTN</name>
<accession>A4IJL4</accession>
<gene>
    <name evidence="1" type="primary">rpoA</name>
    <name type="ordered locus">GTNG_0131</name>
</gene>
<feature type="chain" id="PRO_0000296815" description="DNA-directed RNA polymerase subunit alpha">
    <location>
        <begin position="1"/>
        <end position="314"/>
    </location>
</feature>
<feature type="region of interest" description="Alpha N-terminal domain (alpha-NTD)" evidence="1">
    <location>
        <begin position="1"/>
        <end position="228"/>
    </location>
</feature>
<feature type="region of interest" description="Alpha C-terminal domain (alpha-CTD)" evidence="1">
    <location>
        <begin position="245"/>
        <end position="314"/>
    </location>
</feature>
<protein>
    <recommendedName>
        <fullName evidence="1">DNA-directed RNA polymerase subunit alpha</fullName>
        <shortName evidence="1">RNAP subunit alpha</shortName>
        <ecNumber evidence="1">2.7.7.6</ecNumber>
    </recommendedName>
    <alternativeName>
        <fullName evidence="1">RNA polymerase subunit alpha</fullName>
    </alternativeName>
    <alternativeName>
        <fullName evidence="1">Transcriptase subunit alpha</fullName>
    </alternativeName>
</protein>
<reference key="1">
    <citation type="journal article" date="2007" name="Proc. Natl. Acad. Sci. U.S.A.">
        <title>Genome and proteome of long-chain alkane degrading Geobacillus thermodenitrificans NG80-2 isolated from a deep-subsurface oil reservoir.</title>
        <authorList>
            <person name="Feng L."/>
            <person name="Wang W."/>
            <person name="Cheng J."/>
            <person name="Ren Y."/>
            <person name="Zhao G."/>
            <person name="Gao C."/>
            <person name="Tang Y."/>
            <person name="Liu X."/>
            <person name="Han W."/>
            <person name="Peng X."/>
            <person name="Liu R."/>
            <person name="Wang L."/>
        </authorList>
    </citation>
    <scope>NUCLEOTIDE SEQUENCE [LARGE SCALE GENOMIC DNA]</scope>
    <source>
        <strain>NG80-2</strain>
    </source>
</reference>